<proteinExistence type="inferred from homology"/>
<name>MATK_PHRAU</name>
<evidence type="ECO:0000255" key="1">
    <source>
        <dbReference type="HAMAP-Rule" id="MF_01390"/>
    </source>
</evidence>
<dbReference type="EMBL" id="AF144575">
    <property type="protein sequence ID" value="AAF20331.1"/>
    <property type="molecule type" value="Genomic_DNA"/>
</dbReference>
<dbReference type="RefSeq" id="YP_008855072.1">
    <property type="nucleotide sequence ID" value="NC_022958.1"/>
</dbReference>
<dbReference type="GeneID" id="17728878"/>
<dbReference type="GO" id="GO:0009507">
    <property type="term" value="C:chloroplast"/>
    <property type="evidence" value="ECO:0007669"/>
    <property type="project" value="UniProtKB-SubCell"/>
</dbReference>
<dbReference type="GO" id="GO:0003723">
    <property type="term" value="F:RNA binding"/>
    <property type="evidence" value="ECO:0007669"/>
    <property type="project" value="UniProtKB-KW"/>
</dbReference>
<dbReference type="GO" id="GO:0006397">
    <property type="term" value="P:mRNA processing"/>
    <property type="evidence" value="ECO:0007669"/>
    <property type="project" value="UniProtKB-KW"/>
</dbReference>
<dbReference type="GO" id="GO:0008380">
    <property type="term" value="P:RNA splicing"/>
    <property type="evidence" value="ECO:0007669"/>
    <property type="project" value="UniProtKB-UniRule"/>
</dbReference>
<dbReference type="GO" id="GO:0008033">
    <property type="term" value="P:tRNA processing"/>
    <property type="evidence" value="ECO:0007669"/>
    <property type="project" value="UniProtKB-KW"/>
</dbReference>
<dbReference type="HAMAP" id="MF_01390">
    <property type="entry name" value="MatK"/>
    <property type="match status" value="1"/>
</dbReference>
<dbReference type="InterPro" id="IPR024937">
    <property type="entry name" value="Domain_X"/>
</dbReference>
<dbReference type="InterPro" id="IPR002866">
    <property type="entry name" value="Maturase_MatK"/>
</dbReference>
<dbReference type="InterPro" id="IPR024942">
    <property type="entry name" value="Maturase_MatK_N"/>
</dbReference>
<dbReference type="PANTHER" id="PTHR34811">
    <property type="entry name" value="MATURASE K"/>
    <property type="match status" value="1"/>
</dbReference>
<dbReference type="PANTHER" id="PTHR34811:SF1">
    <property type="entry name" value="MATURASE K"/>
    <property type="match status" value="1"/>
</dbReference>
<dbReference type="Pfam" id="PF01348">
    <property type="entry name" value="Intron_maturas2"/>
    <property type="match status" value="1"/>
</dbReference>
<dbReference type="Pfam" id="PF01824">
    <property type="entry name" value="MatK_N"/>
    <property type="match status" value="1"/>
</dbReference>
<keyword id="KW-0150">Chloroplast</keyword>
<keyword id="KW-0507">mRNA processing</keyword>
<keyword id="KW-0934">Plastid</keyword>
<keyword id="KW-0694">RNA-binding</keyword>
<keyword id="KW-0819">tRNA processing</keyword>
<gene>
    <name evidence="1" type="primary">matK</name>
</gene>
<accession>Q9TIC1</accession>
<reference key="1">
    <citation type="submission" date="1999-04" db="EMBL/GenBank/DDBJ databases">
        <title>Phylogenetic relationships in subfamily Chloridoideae (Poaceae) based on matK sequences: a preliminary assessment.</title>
        <authorList>
            <person name="Hilu K.W."/>
            <person name="Alice L.A."/>
        </authorList>
    </citation>
    <scope>NUCLEOTIDE SEQUENCE [GENOMIC DNA]</scope>
</reference>
<protein>
    <recommendedName>
        <fullName evidence="1">Maturase K</fullName>
    </recommendedName>
    <alternativeName>
        <fullName evidence="1">Intron maturase</fullName>
    </alternativeName>
</protein>
<geneLocation type="chloroplast"/>
<sequence>MEKFEGYSEKQKSRQQYFVYPLLFQEYIYAFAHDYGLNGSEPVEIIGCNNKKFSSLLVKRLIIRMYQQNFWINSVNHPNQDRLLDHSNYFYSEFYSQILSEGFAIVVEIPFSLGELSCPEEKEIPKFQNLQSIHSIFPFLEDKFLHLHYLSHLEIPYPIHLEILVQLLEYRIQDVPSLHLLRFFLNYYSNWNSLITSMKSIFLLKKENKRLFRFLYNSYVSEYEFFLLFLRKQSSCLRLTSSGTFLERIHFSRKMEHFGVMYPGFFRKTIWFFMDPLMHYARYQGKAILASKGTLLLKKKWKSYLVNFSQYFFSFWTQPQRIRINQLTNSCFDFLGYLSSVPINTLLVRNQMLENSFLIDTRMKKFDTTVPATPLIGSLSKAQFCTGSGHPISKPVWTDLSDWDILDRFGRISRNLFHYHSGSSKKRTLYRLKYILRLSCARTLARKHKSTVRTFMQRLGSVFLEEFFTEEEQVFSLMFTKTTHFSFHGSHSERIWYLDIIRINDLVNPLTLN</sequence>
<organism>
    <name type="scientific">Phragmites australis</name>
    <name type="common">Common reed</name>
    <name type="synonym">Arundo australis</name>
    <dbReference type="NCBI Taxonomy" id="29695"/>
    <lineage>
        <taxon>Eukaryota</taxon>
        <taxon>Viridiplantae</taxon>
        <taxon>Streptophyta</taxon>
        <taxon>Embryophyta</taxon>
        <taxon>Tracheophyta</taxon>
        <taxon>Spermatophyta</taxon>
        <taxon>Magnoliopsida</taxon>
        <taxon>Liliopsida</taxon>
        <taxon>Poales</taxon>
        <taxon>Poaceae</taxon>
        <taxon>PACMAD clade</taxon>
        <taxon>Arundinoideae</taxon>
        <taxon>Molinieae</taxon>
        <taxon>Molininae</taxon>
        <taxon>Phragmites</taxon>
    </lineage>
</organism>
<comment type="function">
    <text evidence="1">Usually encoded in the trnK tRNA gene intron. Probably assists in splicing its own and other chloroplast group II introns.</text>
</comment>
<comment type="subcellular location">
    <subcellularLocation>
        <location>Plastid</location>
        <location>Chloroplast</location>
    </subcellularLocation>
</comment>
<comment type="similarity">
    <text evidence="1">Belongs to the intron maturase 2 family. MatK subfamily.</text>
</comment>
<feature type="chain" id="PRO_0000143590" description="Maturase K">
    <location>
        <begin position="1"/>
        <end position="513"/>
    </location>
</feature>